<accession>Q1GE05</accession>
<keyword id="KW-0963">Cytoplasm</keyword>
<keyword id="KW-0570">Pentose shunt</keyword>
<keyword id="KW-1185">Reference proteome</keyword>
<keyword id="KW-0704">Schiff base</keyword>
<keyword id="KW-0808">Transferase</keyword>
<comment type="function">
    <text evidence="1">Transaldolase is important for the balance of metabolites in the pentose-phosphate pathway.</text>
</comment>
<comment type="catalytic activity">
    <reaction evidence="1">
        <text>D-sedoheptulose 7-phosphate + D-glyceraldehyde 3-phosphate = D-erythrose 4-phosphate + beta-D-fructose 6-phosphate</text>
        <dbReference type="Rhea" id="RHEA:17053"/>
        <dbReference type="ChEBI" id="CHEBI:16897"/>
        <dbReference type="ChEBI" id="CHEBI:57483"/>
        <dbReference type="ChEBI" id="CHEBI:57634"/>
        <dbReference type="ChEBI" id="CHEBI:59776"/>
        <dbReference type="EC" id="2.2.1.2"/>
    </reaction>
</comment>
<comment type="pathway">
    <text evidence="1">Carbohydrate degradation; pentose phosphate pathway; D-glyceraldehyde 3-phosphate and beta-D-fructose 6-phosphate from D-ribose 5-phosphate and D-xylulose 5-phosphate (non-oxidative stage): step 2/3.</text>
</comment>
<comment type="subcellular location">
    <subcellularLocation>
        <location evidence="1">Cytoplasm</location>
    </subcellularLocation>
</comment>
<comment type="similarity">
    <text evidence="1">Belongs to the transaldolase family. Type 3B subfamily.</text>
</comment>
<protein>
    <recommendedName>
        <fullName evidence="1">Probable transaldolase</fullName>
        <ecNumber evidence="1">2.2.1.2</ecNumber>
    </recommendedName>
</protein>
<proteinExistence type="inferred from homology"/>
<gene>
    <name evidence="1" type="primary">tal</name>
    <name type="ordered locus">TM1040_2379</name>
</gene>
<reference key="1">
    <citation type="submission" date="2006-05" db="EMBL/GenBank/DDBJ databases">
        <title>Complete sequence of chromosome of Silicibacter sp. TM1040.</title>
        <authorList>
            <consortium name="US DOE Joint Genome Institute"/>
            <person name="Copeland A."/>
            <person name="Lucas S."/>
            <person name="Lapidus A."/>
            <person name="Barry K."/>
            <person name="Detter J.C."/>
            <person name="Glavina del Rio T."/>
            <person name="Hammon N."/>
            <person name="Israni S."/>
            <person name="Dalin E."/>
            <person name="Tice H."/>
            <person name="Pitluck S."/>
            <person name="Brettin T."/>
            <person name="Bruce D."/>
            <person name="Han C."/>
            <person name="Tapia R."/>
            <person name="Goodwin L."/>
            <person name="Thompson L.S."/>
            <person name="Gilna P."/>
            <person name="Schmutz J."/>
            <person name="Larimer F."/>
            <person name="Land M."/>
            <person name="Hauser L."/>
            <person name="Kyrpides N."/>
            <person name="Kim E."/>
            <person name="Belas R."/>
            <person name="Moran M.A."/>
            <person name="Buchan A."/>
            <person name="Gonzalez J.M."/>
            <person name="Schell M.A."/>
            <person name="Sun F."/>
            <person name="Richardson P."/>
        </authorList>
    </citation>
    <scope>NUCLEOTIDE SEQUENCE [LARGE SCALE GENOMIC DNA]</scope>
    <source>
        <strain>TM1040</strain>
    </source>
</reference>
<name>TAL_RUEST</name>
<sequence>MKFFVDTAEIDAIAELNDLGMVDGVTTNPSLIKKSGRDIIEVTKEICDLVDGPVSAEVTATDAETMIAEGRKLLEIADNITVKVPLTWDGLKACKTLTDDGHKVNVTLCFSANQALLAAKAGATFISPFIGRLDDVNLDGMDLIEDIRTVYDNYGFETEILAASIRTVNHILDSARIGADVITAPPAVIKSMVNHPLTDKGLDAFLADIKAAGIKIL</sequence>
<dbReference type="EC" id="2.2.1.2" evidence="1"/>
<dbReference type="EMBL" id="CP000377">
    <property type="protein sequence ID" value="ABF65111.1"/>
    <property type="molecule type" value="Genomic_DNA"/>
</dbReference>
<dbReference type="RefSeq" id="WP_011539699.1">
    <property type="nucleotide sequence ID" value="NC_008044.1"/>
</dbReference>
<dbReference type="SMR" id="Q1GE05"/>
<dbReference type="STRING" id="292414.TM1040_2379"/>
<dbReference type="KEGG" id="sit:TM1040_2379"/>
<dbReference type="eggNOG" id="COG0176">
    <property type="taxonomic scope" value="Bacteria"/>
</dbReference>
<dbReference type="HOGENOM" id="CLU_079764_0_0_5"/>
<dbReference type="OrthoDB" id="9807051at2"/>
<dbReference type="UniPathway" id="UPA00115">
    <property type="reaction ID" value="UER00414"/>
</dbReference>
<dbReference type="Proteomes" id="UP000000636">
    <property type="component" value="Chromosome"/>
</dbReference>
<dbReference type="GO" id="GO:0005737">
    <property type="term" value="C:cytoplasm"/>
    <property type="evidence" value="ECO:0007669"/>
    <property type="project" value="UniProtKB-SubCell"/>
</dbReference>
<dbReference type="GO" id="GO:0016832">
    <property type="term" value="F:aldehyde-lyase activity"/>
    <property type="evidence" value="ECO:0007669"/>
    <property type="project" value="InterPro"/>
</dbReference>
<dbReference type="GO" id="GO:0004801">
    <property type="term" value="F:transaldolase activity"/>
    <property type="evidence" value="ECO:0007669"/>
    <property type="project" value="UniProtKB-UniRule"/>
</dbReference>
<dbReference type="GO" id="GO:0005975">
    <property type="term" value="P:carbohydrate metabolic process"/>
    <property type="evidence" value="ECO:0007669"/>
    <property type="project" value="InterPro"/>
</dbReference>
<dbReference type="GO" id="GO:0006098">
    <property type="term" value="P:pentose-phosphate shunt"/>
    <property type="evidence" value="ECO:0007669"/>
    <property type="project" value="UniProtKB-UniRule"/>
</dbReference>
<dbReference type="CDD" id="cd00956">
    <property type="entry name" value="Transaldolase_FSA"/>
    <property type="match status" value="1"/>
</dbReference>
<dbReference type="FunFam" id="3.20.20.70:FF:000018">
    <property type="entry name" value="Probable transaldolase"/>
    <property type="match status" value="1"/>
</dbReference>
<dbReference type="Gene3D" id="3.20.20.70">
    <property type="entry name" value="Aldolase class I"/>
    <property type="match status" value="1"/>
</dbReference>
<dbReference type="HAMAP" id="MF_00494">
    <property type="entry name" value="Transaldolase_3b"/>
    <property type="match status" value="1"/>
</dbReference>
<dbReference type="InterPro" id="IPR013785">
    <property type="entry name" value="Aldolase_TIM"/>
</dbReference>
<dbReference type="InterPro" id="IPR001585">
    <property type="entry name" value="TAL/FSA"/>
</dbReference>
<dbReference type="InterPro" id="IPR022999">
    <property type="entry name" value="Transaldolase_3B"/>
</dbReference>
<dbReference type="InterPro" id="IPR004731">
    <property type="entry name" value="Transaldolase_3B/F6P_aldolase"/>
</dbReference>
<dbReference type="InterPro" id="IPR018225">
    <property type="entry name" value="Transaldolase_AS"/>
</dbReference>
<dbReference type="InterPro" id="IPR033919">
    <property type="entry name" value="TSA/FSA_arc/bac"/>
</dbReference>
<dbReference type="NCBIfam" id="TIGR00875">
    <property type="entry name" value="fsa_talC_mipB"/>
    <property type="match status" value="1"/>
</dbReference>
<dbReference type="PANTHER" id="PTHR10683:SF40">
    <property type="entry name" value="FRUCTOSE-6-PHOSPHATE ALDOLASE 1-RELATED"/>
    <property type="match status" value="1"/>
</dbReference>
<dbReference type="PANTHER" id="PTHR10683">
    <property type="entry name" value="TRANSALDOLASE"/>
    <property type="match status" value="1"/>
</dbReference>
<dbReference type="Pfam" id="PF00923">
    <property type="entry name" value="TAL_FSA"/>
    <property type="match status" value="1"/>
</dbReference>
<dbReference type="SUPFAM" id="SSF51569">
    <property type="entry name" value="Aldolase"/>
    <property type="match status" value="1"/>
</dbReference>
<dbReference type="PROSITE" id="PS01054">
    <property type="entry name" value="TRANSALDOLASE_1"/>
    <property type="match status" value="1"/>
</dbReference>
<dbReference type="PROSITE" id="PS00958">
    <property type="entry name" value="TRANSALDOLASE_2"/>
    <property type="match status" value="1"/>
</dbReference>
<feature type="chain" id="PRO_1000126355" description="Probable transaldolase">
    <location>
        <begin position="1"/>
        <end position="217"/>
    </location>
</feature>
<feature type="active site" description="Schiff-base intermediate with substrate" evidence="1">
    <location>
        <position position="83"/>
    </location>
</feature>
<evidence type="ECO:0000255" key="1">
    <source>
        <dbReference type="HAMAP-Rule" id="MF_00494"/>
    </source>
</evidence>
<organism>
    <name type="scientific">Ruegeria sp. (strain TM1040)</name>
    <name type="common">Silicibacter sp.</name>
    <dbReference type="NCBI Taxonomy" id="292414"/>
    <lineage>
        <taxon>Bacteria</taxon>
        <taxon>Pseudomonadati</taxon>
        <taxon>Pseudomonadota</taxon>
        <taxon>Alphaproteobacteria</taxon>
        <taxon>Rhodobacterales</taxon>
        <taxon>Roseobacteraceae</taxon>
        <taxon>Ruegeria</taxon>
    </lineage>
</organism>